<keyword id="KW-0064">Aspartyl protease</keyword>
<keyword id="KW-1015">Disulfide bond</keyword>
<keyword id="KW-0378">Hydrolase</keyword>
<keyword id="KW-0645">Protease</keyword>
<keyword id="KW-0964">Secreted</keyword>
<keyword id="KW-0732">Signal</keyword>
<keyword id="KW-0843">Virulence</keyword>
<keyword id="KW-0865">Zymogen</keyword>
<protein>
    <recommendedName>
        <fullName evidence="4">Aspergillopepsin-1</fullName>
        <ecNumber evidence="1">3.4.23.18</ecNumber>
    </recommendedName>
    <alternativeName>
        <fullName>Aspartic protease pepA</fullName>
    </alternativeName>
    <alternativeName>
        <fullName>Aspergillopepsin I</fullName>
    </alternativeName>
    <alternativeName>
        <fullName>Aspergillopeptidase A</fullName>
    </alternativeName>
</protein>
<feature type="signal peptide" evidence="2">
    <location>
        <begin position="1"/>
        <end position="20"/>
    </location>
</feature>
<feature type="propeptide" id="PRO_0000407043" description="Activation peptide" evidence="1">
    <location>
        <begin position="21"/>
        <end position="70"/>
    </location>
</feature>
<feature type="chain" id="PRO_0000407044" description="Aspergillopepsin-1">
    <location>
        <begin position="71"/>
        <end position="395"/>
    </location>
</feature>
<feature type="domain" description="Peptidase A1" evidence="3">
    <location>
        <begin position="86"/>
        <end position="392"/>
    </location>
</feature>
<feature type="active site" evidence="3">
    <location>
        <position position="102"/>
    </location>
</feature>
<feature type="active site" evidence="3">
    <location>
        <position position="284"/>
    </location>
</feature>
<feature type="disulfide bond" evidence="3">
    <location>
        <begin position="320"/>
        <end position="355"/>
    </location>
</feature>
<evidence type="ECO:0000250" key="1">
    <source>
        <dbReference type="UniProtKB" id="Q12567"/>
    </source>
</evidence>
<evidence type="ECO:0000255" key="2"/>
<evidence type="ECO:0000255" key="3">
    <source>
        <dbReference type="PROSITE-ProRule" id="PRU01103"/>
    </source>
</evidence>
<evidence type="ECO:0000305" key="4"/>
<organism>
    <name type="scientific">Aspergillus fumigatus (strain CBS 144.89 / FGSC A1163 / CEA10)</name>
    <name type="common">Neosartorya fumigata</name>
    <dbReference type="NCBI Taxonomy" id="451804"/>
    <lineage>
        <taxon>Eukaryota</taxon>
        <taxon>Fungi</taxon>
        <taxon>Dikarya</taxon>
        <taxon>Ascomycota</taxon>
        <taxon>Pezizomycotina</taxon>
        <taxon>Eurotiomycetes</taxon>
        <taxon>Eurotiomycetidae</taxon>
        <taxon>Eurotiales</taxon>
        <taxon>Aspergillaceae</taxon>
        <taxon>Aspergillus</taxon>
        <taxon>Aspergillus subgen. Fumigati</taxon>
    </lineage>
</organism>
<gene>
    <name type="primary">pepA</name>
    <name type="ORF">AFUB_061010</name>
</gene>
<reference key="1">
    <citation type="journal article" date="2008" name="PLoS Genet.">
        <title>Genomic islands in the pathogenic filamentous fungus Aspergillus fumigatus.</title>
        <authorList>
            <person name="Fedorova N.D."/>
            <person name="Khaldi N."/>
            <person name="Joardar V.S."/>
            <person name="Maiti R."/>
            <person name="Amedeo P."/>
            <person name="Anderson M.J."/>
            <person name="Crabtree J."/>
            <person name="Silva J.C."/>
            <person name="Badger J.H."/>
            <person name="Albarraq A."/>
            <person name="Angiuoli S."/>
            <person name="Bussey H."/>
            <person name="Bowyer P."/>
            <person name="Cotty P.J."/>
            <person name="Dyer P.S."/>
            <person name="Egan A."/>
            <person name="Galens K."/>
            <person name="Fraser-Liggett C.M."/>
            <person name="Haas B.J."/>
            <person name="Inman J.M."/>
            <person name="Kent R."/>
            <person name="Lemieux S."/>
            <person name="Malavazi I."/>
            <person name="Orvis J."/>
            <person name="Roemer T."/>
            <person name="Ronning C.M."/>
            <person name="Sundaram J.P."/>
            <person name="Sutton G."/>
            <person name="Turner G."/>
            <person name="Venter J.C."/>
            <person name="White O.R."/>
            <person name="Whitty B.R."/>
            <person name="Youngman P."/>
            <person name="Wolfe K.H."/>
            <person name="Goldman G.H."/>
            <person name="Wortman J.R."/>
            <person name="Jiang B."/>
            <person name="Denning D.W."/>
            <person name="Nierman W.C."/>
        </authorList>
    </citation>
    <scope>NUCLEOTIDE SEQUENCE [LARGE SCALE GENOMIC DNA]</scope>
    <source>
        <strain>CBS 144.89 / FGSC A1163 / CEA10</strain>
    </source>
</reference>
<dbReference type="EC" id="3.4.23.18" evidence="1"/>
<dbReference type="EMBL" id="DS499597">
    <property type="protein sequence ID" value="EDP52067.1"/>
    <property type="molecule type" value="Genomic_DNA"/>
</dbReference>
<dbReference type="SMR" id="B0Y1V8"/>
<dbReference type="Allergome" id="63">
    <property type="allergen name" value="Asp f 10"/>
</dbReference>
<dbReference type="MEROPS" id="A01.026"/>
<dbReference type="EnsemblFungi" id="EDP52067">
    <property type="protein sequence ID" value="EDP52067"/>
    <property type="gene ID" value="AFUB_061010"/>
</dbReference>
<dbReference type="VEuPathDB" id="FungiDB:AFUB_061010"/>
<dbReference type="HOGENOM" id="CLU_013253_0_1_1"/>
<dbReference type="OrthoDB" id="96322at5052"/>
<dbReference type="PhylomeDB" id="B0Y1V8"/>
<dbReference type="Proteomes" id="UP000001699">
    <property type="component" value="Unassembled WGS sequence"/>
</dbReference>
<dbReference type="GO" id="GO:0005576">
    <property type="term" value="C:extracellular region"/>
    <property type="evidence" value="ECO:0007669"/>
    <property type="project" value="UniProtKB-SubCell"/>
</dbReference>
<dbReference type="GO" id="GO:0004190">
    <property type="term" value="F:aspartic-type endopeptidase activity"/>
    <property type="evidence" value="ECO:0007669"/>
    <property type="project" value="UniProtKB-KW"/>
</dbReference>
<dbReference type="GO" id="GO:0006508">
    <property type="term" value="P:proteolysis"/>
    <property type="evidence" value="ECO:0007669"/>
    <property type="project" value="UniProtKB-KW"/>
</dbReference>
<dbReference type="CDD" id="cd06097">
    <property type="entry name" value="Aspergillopepsin_like"/>
    <property type="match status" value="1"/>
</dbReference>
<dbReference type="FunFam" id="2.40.70.10:FF:000024">
    <property type="entry name" value="Endothiapepsin"/>
    <property type="match status" value="1"/>
</dbReference>
<dbReference type="FunFam" id="2.40.70.10:FF:000026">
    <property type="entry name" value="Endothiapepsin"/>
    <property type="match status" value="1"/>
</dbReference>
<dbReference type="Gene3D" id="2.40.70.10">
    <property type="entry name" value="Acid Proteases"/>
    <property type="match status" value="2"/>
</dbReference>
<dbReference type="InterPro" id="IPR001461">
    <property type="entry name" value="Aspartic_peptidase_A1"/>
</dbReference>
<dbReference type="InterPro" id="IPR001969">
    <property type="entry name" value="Aspartic_peptidase_AS"/>
</dbReference>
<dbReference type="InterPro" id="IPR034163">
    <property type="entry name" value="Aspergillopepsin-like_cat_dom"/>
</dbReference>
<dbReference type="InterPro" id="IPR033121">
    <property type="entry name" value="PEPTIDASE_A1"/>
</dbReference>
<dbReference type="InterPro" id="IPR021109">
    <property type="entry name" value="Peptidase_aspartic_dom_sf"/>
</dbReference>
<dbReference type="PANTHER" id="PTHR47966:SF2">
    <property type="entry name" value="ASPERGILLOPEPSIN-1-RELATED"/>
    <property type="match status" value="1"/>
</dbReference>
<dbReference type="PANTHER" id="PTHR47966">
    <property type="entry name" value="BETA-SITE APP-CLEAVING ENZYME, ISOFORM A-RELATED"/>
    <property type="match status" value="1"/>
</dbReference>
<dbReference type="Pfam" id="PF00026">
    <property type="entry name" value="Asp"/>
    <property type="match status" value="1"/>
</dbReference>
<dbReference type="PRINTS" id="PR00792">
    <property type="entry name" value="PEPSIN"/>
</dbReference>
<dbReference type="SUPFAM" id="SSF50630">
    <property type="entry name" value="Acid proteases"/>
    <property type="match status" value="1"/>
</dbReference>
<dbReference type="PROSITE" id="PS00141">
    <property type="entry name" value="ASP_PROTEASE"/>
    <property type="match status" value="2"/>
</dbReference>
<dbReference type="PROSITE" id="PS51767">
    <property type="entry name" value="PEPTIDASE_A1"/>
    <property type="match status" value="1"/>
</dbReference>
<name>PEPA_ASPFC</name>
<comment type="function">
    <text evidence="1">Secreted aspartic endopeptidase that allows assimilation of proteinaceous substrates. The scissile peptide bond is attacked by a nucleophilic water molecule activated by two aspartic residues in the active site. Shows a broad primary substrate specificity. Favors hydrophobic residues at the P1 and P1' positions, but also accepts a lysine residue in the P1 position, leading to the activation of trypsinogen and chymotrypsinogen A.</text>
</comment>
<comment type="catalytic activity">
    <reaction evidence="1">
        <text>Hydrolysis of proteins with broad specificity. Generally favors hydrophobic residues in P1 and P1', but also accepts Lys in P1, which leads to activation of trypsinogen. Does not clot milk.</text>
        <dbReference type="EC" id="3.4.23.18"/>
    </reaction>
</comment>
<comment type="subunit">
    <text evidence="1">Monomer.</text>
</comment>
<comment type="subcellular location">
    <subcellularLocation>
        <location evidence="1">Secreted</location>
    </subcellularLocation>
</comment>
<comment type="similarity">
    <text evidence="3">Belongs to the peptidase A1 family.</text>
</comment>
<accession>B0Y1V8</accession>
<proteinExistence type="inferred from homology"/>
<sequence length="395" mass="41613">MVVFSKVTAVVVGLSTIVSAVPVVQPRKGFTINQVARPVTNKKTVNLPAVYANALTKYGGTVPDSVKAAASSGSAVTTPEQYDSEYLTPVKVGGTTLNLDFDTGSADLWVFSSELSASQSSGHAIYKPSANAQKLNGYTWKIQYGDGSSASGDVYKDTVTVGGVTAQSQAVEAASHISSQFVQDKDNDGLLGLAFSSINTVSPRPQTTFFDTVKSQLDSPLFAVTLKYHAPGTYDFGYIDNSKFQGELTYTDVDSSQGFWMFTADGYGVGNGAPNSNSISGIADTGTTLLLLDDSVVADYYRQVSGAKNSNQYGGYVFPCSTKLPSFTTVIGGYNAVVPGEYINYAPVTDGSSTCYGGIQSNSGLGFSIFGDIFLKSQYVVFDSQGPRLGFAPQA</sequence>